<evidence type="ECO:0000250" key="1">
    <source>
        <dbReference type="UniProtKB" id="P08905"/>
    </source>
</evidence>
<evidence type="ECO:0000250" key="2">
    <source>
        <dbReference type="UniProtKB" id="P85045"/>
    </source>
</evidence>
<evidence type="ECO:0000250" key="3">
    <source>
        <dbReference type="UniProtKB" id="P85345"/>
    </source>
</evidence>
<evidence type="ECO:0000255" key="4"/>
<evidence type="ECO:0000255" key="5">
    <source>
        <dbReference type="PROSITE-ProRule" id="PRU00680"/>
    </source>
</evidence>
<evidence type="ECO:0000255" key="6">
    <source>
        <dbReference type="RuleBase" id="RU004440"/>
    </source>
</evidence>
<evidence type="ECO:0000269" key="7">
    <source>
    </source>
</evidence>
<evidence type="ECO:0000303" key="8">
    <source>
    </source>
</evidence>
<evidence type="ECO:0000305" key="9"/>
<evidence type="ECO:0000312" key="10">
    <source>
        <dbReference type="EMBL" id="ACD76101.1"/>
    </source>
</evidence>
<comment type="function">
    <text evidence="5 7">Lysozymes have primarily a bacteriolytic function; those in tissues and body fluids are associated with the monocyte-macrophage system and enhance the activity of immunoagents (By similarity). Has bacteriolytic activity against Gram-positive bacterium M.luteus, and Gram-negative shrimp pathogenic bacteria V.alginolyticus, V.parahaemolyticus and V.vulnificus. May play a role in host defense (PubMed:18798009).</text>
</comment>
<comment type="catalytic activity">
    <reaction evidence="5">
        <text>Hydrolysis of (1-&gt;4)-beta-linkages between N-acetylmuramic acid and N-acetyl-D-glucosamine residues in a peptidoglycan and between N-acetyl-D-glucosamine residues in chitodextrins.</text>
        <dbReference type="EC" id="3.2.1.17"/>
    </reaction>
</comment>
<comment type="subunit">
    <text evidence="1">Monomer.</text>
</comment>
<comment type="subcellular location">
    <subcellularLocation>
        <location evidence="2">Secreted</location>
    </subcellularLocation>
</comment>
<comment type="tissue specificity">
    <text evidence="7">Strongly expressed in gill and gonad, and marginally detectable in hemolymph and lymphoid organ. Not expressed in kidney, hepatopancreas or tail muscle.</text>
</comment>
<comment type="induction">
    <text evidence="7">(Microbial infection) Expression is up-regulated in response to heat-killed V.alginolyticus injection in kidney, hepatopancreas and muscle, with the strongest up-regulation in hemolymph, gill, gonad and lymphoid organ. After M.luteus challenge there is an increase in expression level at 2 (11.3-fold) and 6 hours (18.3-fold) postinjection, with the maximum level at 8 hours (25.4-fold), and then lowering down to the original level at 16 hours postinjection. After V.alginolyticus challenge there is significant increase in expression level at 4, 6 and 8 hours postinjection, with the maximum level at 16 hours (15.7-fold), and then down-regulated at 24 hours postinjection.</text>
</comment>
<comment type="miscellaneous">
    <text evidence="3">Lysozyme C is capable of both hydrolysis and transglycosylation; it also shows a slight esterase activity. It acts rapidly on both peptide-substituted and unsubstituted peptidoglycan, and slowly on chitin oligosaccharides.</text>
</comment>
<comment type="similarity">
    <text evidence="4 5 6 9">Belongs to the glycosyl hydrolase 22 family.</text>
</comment>
<accession>C1IIX1</accession>
<dbReference type="EC" id="3.2.1.17" evidence="5 10"/>
<dbReference type="EMBL" id="EU591712">
    <property type="protein sequence ID" value="ACD76101.1"/>
    <property type="molecule type" value="mRNA"/>
</dbReference>
<dbReference type="SMR" id="C1IIX1"/>
<dbReference type="CAZy" id="GH22">
    <property type="family name" value="Glycoside Hydrolase Family 22"/>
</dbReference>
<dbReference type="GO" id="GO:0005576">
    <property type="term" value="C:extracellular region"/>
    <property type="evidence" value="ECO:0007669"/>
    <property type="project" value="UniProtKB-SubCell"/>
</dbReference>
<dbReference type="GO" id="GO:0003796">
    <property type="term" value="F:lysozyme activity"/>
    <property type="evidence" value="ECO:0000250"/>
    <property type="project" value="UniProtKB"/>
</dbReference>
<dbReference type="GO" id="GO:0050829">
    <property type="term" value="P:defense response to Gram-negative bacterium"/>
    <property type="evidence" value="ECO:0000314"/>
    <property type="project" value="UniProtKB"/>
</dbReference>
<dbReference type="GO" id="GO:0050830">
    <property type="term" value="P:defense response to Gram-positive bacterium"/>
    <property type="evidence" value="ECO:0000314"/>
    <property type="project" value="UniProtKB"/>
</dbReference>
<dbReference type="GO" id="GO:0031640">
    <property type="term" value="P:killing of cells of another organism"/>
    <property type="evidence" value="ECO:0007669"/>
    <property type="project" value="UniProtKB-KW"/>
</dbReference>
<dbReference type="CDD" id="cd16899">
    <property type="entry name" value="LYZ_C_invert"/>
    <property type="match status" value="1"/>
</dbReference>
<dbReference type="FunFam" id="1.10.530.10:FF:000024">
    <property type="entry name" value="C-type lysozyme"/>
    <property type="match status" value="1"/>
</dbReference>
<dbReference type="Gene3D" id="1.10.530.10">
    <property type="match status" value="1"/>
</dbReference>
<dbReference type="InterPro" id="IPR001916">
    <property type="entry name" value="Glyco_hydro_22"/>
</dbReference>
<dbReference type="InterPro" id="IPR019799">
    <property type="entry name" value="Glyco_hydro_22_CS"/>
</dbReference>
<dbReference type="InterPro" id="IPR023346">
    <property type="entry name" value="Lysozyme-like_dom_sf"/>
</dbReference>
<dbReference type="PANTHER" id="PTHR11407">
    <property type="entry name" value="LYSOZYME C"/>
    <property type="match status" value="1"/>
</dbReference>
<dbReference type="PANTHER" id="PTHR11407:SF63">
    <property type="entry name" value="LYSOZYME C"/>
    <property type="match status" value="1"/>
</dbReference>
<dbReference type="Pfam" id="PF00062">
    <property type="entry name" value="Lys"/>
    <property type="match status" value="1"/>
</dbReference>
<dbReference type="PRINTS" id="PR00135">
    <property type="entry name" value="LYZLACT"/>
</dbReference>
<dbReference type="SMART" id="SM00263">
    <property type="entry name" value="LYZ1"/>
    <property type="match status" value="1"/>
</dbReference>
<dbReference type="SUPFAM" id="SSF53955">
    <property type="entry name" value="Lysozyme-like"/>
    <property type="match status" value="1"/>
</dbReference>
<dbReference type="PROSITE" id="PS00128">
    <property type="entry name" value="GLYCOSYL_HYDROL_F22_1"/>
    <property type="match status" value="1"/>
</dbReference>
<dbReference type="PROSITE" id="PS51348">
    <property type="entry name" value="GLYCOSYL_HYDROL_F22_2"/>
    <property type="match status" value="1"/>
</dbReference>
<reference evidence="10" key="1">
    <citation type="journal article" date="2009" name="Mol. Biol. Rep.">
        <title>Molecular cloning, characterization, expression and antibacterial analysis of a lysozyme homologue from Fenneropenaeus merguiensis.</title>
        <authorList>
            <person name="Mai W.J."/>
            <person name="Hu C.Q."/>
        </authorList>
    </citation>
    <scope>NUCLEOTIDE SEQUENCE [MRNA]</scope>
    <scope>FUNCTION</scope>
    <scope>TISSUE SPECIFICITY</scope>
    <scope>INDUCTION</scope>
    <scope>PHYLOGENETIC ANALYSIS</scope>
</reference>
<protein>
    <recommendedName>
        <fullName evidence="5 8 10">Lysozyme C</fullName>
        <ecNumber evidence="5 10">3.2.1.17</ecNumber>
    </recommendedName>
    <alternativeName>
        <fullName evidence="5">1,4-beta-N-acetylmuramidase C</fullName>
    </alternativeName>
</protein>
<proteinExistence type="evidence at transcript level"/>
<organism evidence="10">
    <name type="scientific">Penaeus merguiensis</name>
    <name type="common">Banana prawn</name>
    <name type="synonym">Fenneropenaeus merguiensis</name>
    <dbReference type="NCBI Taxonomy" id="71412"/>
    <lineage>
        <taxon>Eukaryota</taxon>
        <taxon>Metazoa</taxon>
        <taxon>Ecdysozoa</taxon>
        <taxon>Arthropoda</taxon>
        <taxon>Crustacea</taxon>
        <taxon>Multicrustacea</taxon>
        <taxon>Malacostraca</taxon>
        <taxon>Eumalacostraca</taxon>
        <taxon>Eucarida</taxon>
        <taxon>Decapoda</taxon>
        <taxon>Dendrobranchiata</taxon>
        <taxon>Penaeoidea</taxon>
        <taxon>Penaeidae</taxon>
        <taxon>Penaeus</taxon>
    </lineage>
</organism>
<name>LYSC_PENME</name>
<feature type="signal peptide" evidence="4">
    <location>
        <begin position="1"/>
        <end position="18"/>
    </location>
</feature>
<feature type="chain" id="PRO_5002909118" description="Lysozyme C" evidence="4">
    <location>
        <begin position="19"/>
        <end position="158"/>
    </location>
</feature>
<feature type="domain" description="C-type lysozyme" evidence="5">
    <location>
        <begin position="19"/>
        <end position="150"/>
    </location>
</feature>
<feature type="active site" evidence="5">
    <location>
        <position position="51"/>
    </location>
</feature>
<feature type="active site" evidence="5">
    <location>
        <position position="68"/>
    </location>
</feature>
<feature type="disulfide bond" evidence="5">
    <location>
        <begin position="24"/>
        <end position="147"/>
    </location>
</feature>
<feature type="disulfide bond" evidence="5">
    <location>
        <begin position="46"/>
        <end position="135"/>
    </location>
</feature>
<feature type="disulfide bond" evidence="5">
    <location>
        <begin position="80"/>
        <end position="93"/>
    </location>
</feature>
<feature type="disulfide bond" evidence="5">
    <location>
        <begin position="89"/>
        <end position="107"/>
    </location>
</feature>
<keyword id="KW-0929">Antimicrobial</keyword>
<keyword id="KW-0081">Bacteriolytic enzyme</keyword>
<keyword id="KW-1015">Disulfide bond</keyword>
<keyword id="KW-0326">Glycosidase</keyword>
<keyword id="KW-0378">Hydrolase</keyword>
<keyword id="KW-0964">Secreted</keyword>
<keyword id="KW-0732">Signal</keyword>
<sequence length="158" mass="17999">MRVLPLALLVGLLAVSDAKVLGKCEFARLLETRYNLSRNDIKNWVCIAEFESSFNTAATNRNRNRSTDYGIFQINNKYWCGSDYGKNVCGIPCSDLMSDDITAALRCAETVRRATERYRGRGKGYTAWVAYNSKCKKRDLDQYMAECWSRGSNSIFPF</sequence>